<reference key="1">
    <citation type="submission" date="2006-09" db="EMBL/GenBank/DDBJ databases">
        <authorList>
            <consortium name="The Klebsiella pneumonia Genome Sequencing Project"/>
            <person name="McClelland M."/>
            <person name="Sanderson E.K."/>
            <person name="Spieth J."/>
            <person name="Clifton W.S."/>
            <person name="Latreille P."/>
            <person name="Sabo A."/>
            <person name="Pepin K."/>
            <person name="Bhonagiri V."/>
            <person name="Porwollik S."/>
            <person name="Ali J."/>
            <person name="Wilson R.K."/>
        </authorList>
    </citation>
    <scope>NUCLEOTIDE SEQUENCE [LARGE SCALE GENOMIC DNA]</scope>
    <source>
        <strain>ATCC 700721 / MGH 78578</strain>
    </source>
</reference>
<proteinExistence type="inferred from homology"/>
<comment type="function">
    <text evidence="1">Controls the transcription of genes involved in arginine and lysine metabolism.</text>
</comment>
<comment type="subunit">
    <text evidence="1">Homodimer.</text>
</comment>
<comment type="similarity">
    <text evidence="2">Belongs to the LysR transcriptional regulatory family.</text>
</comment>
<gene>
    <name evidence="1" type="primary">argP</name>
    <name type="synonym">iciA</name>
    <name type="ordered locus">KPN78578_32860</name>
    <name type="ORF">KPN_03350</name>
</gene>
<name>ARGP_KLEP7</name>
<protein>
    <recommendedName>
        <fullName evidence="1">HTH-type transcriptional regulator ArgP</fullName>
    </recommendedName>
</protein>
<organism>
    <name type="scientific">Klebsiella pneumoniae subsp. pneumoniae (strain ATCC 700721 / MGH 78578)</name>
    <dbReference type="NCBI Taxonomy" id="272620"/>
    <lineage>
        <taxon>Bacteria</taxon>
        <taxon>Pseudomonadati</taxon>
        <taxon>Pseudomonadota</taxon>
        <taxon>Gammaproteobacteria</taxon>
        <taxon>Enterobacterales</taxon>
        <taxon>Enterobacteriaceae</taxon>
        <taxon>Klebsiella/Raoultella group</taxon>
        <taxon>Klebsiella</taxon>
        <taxon>Klebsiella pneumoniae complex</taxon>
    </lineage>
</organism>
<keyword id="KW-0238">DNA-binding</keyword>
<keyword id="KW-0804">Transcription</keyword>
<keyword id="KW-0805">Transcription regulation</keyword>
<sequence length="297" mass="33579">MKRPDYRTLQALDAVIRERGFERAAQKLCITQSAVSQRIKQLENMFGQPLLVRTVPPRPTEQGQKLLALLRQVELLEEEWLGDEQTGSTPLLLSLAVNADSLATWLLPALANVLSDSPIRLNLQVEDETRTQERLRRGEVVGAVSIQPQALPSCLVDQLGALDYLFVASKEFAQRYFPNGVTRSALLKAPVVAFDHLDDMHQAFLQQNFDLPPGSVPCHIVNSSEAFVQLARQGTTCCMIPHLQIEKELNSGELIDLTPGLFQRRMLYWHRFAPESRMMRRVTDALIDYGHKVLRQD</sequence>
<evidence type="ECO:0000255" key="1">
    <source>
        <dbReference type="HAMAP-Rule" id="MF_00513"/>
    </source>
</evidence>
<evidence type="ECO:0000305" key="2"/>
<dbReference type="EMBL" id="CP000647">
    <property type="protein sequence ID" value="ABR78747.1"/>
    <property type="molecule type" value="Genomic_DNA"/>
</dbReference>
<dbReference type="RefSeq" id="WP_002916497.1">
    <property type="nucleotide sequence ID" value="NC_009648.1"/>
</dbReference>
<dbReference type="SMR" id="A6TDS6"/>
<dbReference type="STRING" id="272620.KPN_03350"/>
<dbReference type="PaxDb" id="272620-KPN_03350"/>
<dbReference type="EnsemblBacteria" id="ABR78747">
    <property type="protein sequence ID" value="ABR78747"/>
    <property type="gene ID" value="KPN_03350"/>
</dbReference>
<dbReference type="GeneID" id="93250651"/>
<dbReference type="KEGG" id="kpn:KPN_03350"/>
<dbReference type="HOGENOM" id="CLU_063829_0_0_6"/>
<dbReference type="Proteomes" id="UP000000265">
    <property type="component" value="Chromosome"/>
</dbReference>
<dbReference type="GO" id="GO:0003677">
    <property type="term" value="F:DNA binding"/>
    <property type="evidence" value="ECO:0007669"/>
    <property type="project" value="UniProtKB-UniRule"/>
</dbReference>
<dbReference type="GO" id="GO:0003700">
    <property type="term" value="F:DNA-binding transcription factor activity"/>
    <property type="evidence" value="ECO:0007669"/>
    <property type="project" value="UniProtKB-UniRule"/>
</dbReference>
<dbReference type="CDD" id="cd08428">
    <property type="entry name" value="PBP2_IciA_ArgP"/>
    <property type="match status" value="1"/>
</dbReference>
<dbReference type="FunFam" id="1.10.10.10:FF:000061">
    <property type="entry name" value="HTH-type transcriptional regulator ArgP"/>
    <property type="match status" value="1"/>
</dbReference>
<dbReference type="FunFam" id="3.40.190.290:FF:000002">
    <property type="entry name" value="HTH-type transcriptional regulator ArgP"/>
    <property type="match status" value="1"/>
</dbReference>
<dbReference type="Gene3D" id="3.40.190.290">
    <property type="match status" value="1"/>
</dbReference>
<dbReference type="Gene3D" id="1.10.10.10">
    <property type="entry name" value="Winged helix-like DNA-binding domain superfamily/Winged helix DNA-binding domain"/>
    <property type="match status" value="1"/>
</dbReference>
<dbReference type="HAMAP" id="MF_00513">
    <property type="entry name" value="HTH_type_ArgP"/>
    <property type="match status" value="1"/>
</dbReference>
<dbReference type="InterPro" id="IPR017685">
    <property type="entry name" value="ArgP"/>
</dbReference>
<dbReference type="InterPro" id="IPR023490">
    <property type="entry name" value="ArgP_gammaproteobact"/>
</dbReference>
<dbReference type="InterPro" id="IPR050176">
    <property type="entry name" value="LTTR"/>
</dbReference>
<dbReference type="InterPro" id="IPR005119">
    <property type="entry name" value="LysR_subst-bd"/>
</dbReference>
<dbReference type="InterPro" id="IPR000847">
    <property type="entry name" value="Tscrpt_reg_HTH_LysR"/>
</dbReference>
<dbReference type="InterPro" id="IPR036388">
    <property type="entry name" value="WH-like_DNA-bd_sf"/>
</dbReference>
<dbReference type="InterPro" id="IPR036390">
    <property type="entry name" value="WH_DNA-bd_sf"/>
</dbReference>
<dbReference type="NCBIfam" id="TIGR03298">
    <property type="entry name" value="argP"/>
    <property type="match status" value="1"/>
</dbReference>
<dbReference type="NCBIfam" id="NF002964">
    <property type="entry name" value="PRK03635.1"/>
    <property type="match status" value="1"/>
</dbReference>
<dbReference type="NCBIfam" id="NF009888">
    <property type="entry name" value="PRK13348.1"/>
    <property type="match status" value="1"/>
</dbReference>
<dbReference type="PANTHER" id="PTHR30579:SF2">
    <property type="entry name" value="HTH-TYPE TRANSCRIPTIONAL REGULATOR ARGP"/>
    <property type="match status" value="1"/>
</dbReference>
<dbReference type="PANTHER" id="PTHR30579">
    <property type="entry name" value="TRANSCRIPTIONAL REGULATOR"/>
    <property type="match status" value="1"/>
</dbReference>
<dbReference type="Pfam" id="PF00126">
    <property type="entry name" value="HTH_1"/>
    <property type="match status" value="1"/>
</dbReference>
<dbReference type="Pfam" id="PF03466">
    <property type="entry name" value="LysR_substrate"/>
    <property type="match status" value="1"/>
</dbReference>
<dbReference type="PRINTS" id="PR00039">
    <property type="entry name" value="HTHLYSR"/>
</dbReference>
<dbReference type="SUPFAM" id="SSF53850">
    <property type="entry name" value="Periplasmic binding protein-like II"/>
    <property type="match status" value="1"/>
</dbReference>
<dbReference type="SUPFAM" id="SSF46785">
    <property type="entry name" value="Winged helix' DNA-binding domain"/>
    <property type="match status" value="1"/>
</dbReference>
<dbReference type="PROSITE" id="PS50931">
    <property type="entry name" value="HTH_LYSR"/>
    <property type="match status" value="1"/>
</dbReference>
<feature type="chain" id="PRO_1000060879" description="HTH-type transcriptional regulator ArgP">
    <location>
        <begin position="1"/>
        <end position="297"/>
    </location>
</feature>
<feature type="domain" description="HTH lysR-type" evidence="1">
    <location>
        <begin position="4"/>
        <end position="60"/>
    </location>
</feature>
<feature type="DNA-binding region" description="H-T-H motif" evidence="1">
    <location>
        <begin position="21"/>
        <end position="40"/>
    </location>
</feature>
<accession>A6TDS6</accession>